<proteinExistence type="evidence at protein level"/>
<name>STT7_ARATH</name>
<accession>Q9S713</accession>
<accession>A4FVQ4</accession>
<accession>Q56WW0</accession>
<gene>
    <name type="primary">STN7</name>
    <name type="ordered locus">At1g68830</name>
    <name type="ORF">F14K14.6</name>
    <name type="ORF">T6L1.2</name>
</gene>
<keyword id="KW-0067">ATP-binding</keyword>
<keyword id="KW-0150">Chloroplast</keyword>
<keyword id="KW-0418">Kinase</keyword>
<keyword id="KW-0472">Membrane</keyword>
<keyword id="KW-0547">Nucleotide-binding</keyword>
<keyword id="KW-0597">Phosphoprotein</keyword>
<keyword id="KW-0934">Plastid</keyword>
<keyword id="KW-1185">Reference proteome</keyword>
<keyword id="KW-0723">Serine/threonine-protein kinase</keyword>
<keyword id="KW-0793">Thylakoid</keyword>
<keyword id="KW-0808">Transferase</keyword>
<keyword id="KW-0809">Transit peptide</keyword>
<dbReference type="EC" id="2.7.11.1"/>
<dbReference type="EMBL" id="AC011665">
    <property type="protein sequence ID" value="AAG51596.1"/>
    <property type="molecule type" value="Genomic_DNA"/>
</dbReference>
<dbReference type="EMBL" id="AC011914">
    <property type="protein sequence ID" value="AAG52037.1"/>
    <property type="molecule type" value="Genomic_DNA"/>
</dbReference>
<dbReference type="EMBL" id="CP002684">
    <property type="protein sequence ID" value="AEE34846.1"/>
    <property type="molecule type" value="Genomic_DNA"/>
</dbReference>
<dbReference type="EMBL" id="BT030352">
    <property type="protein sequence ID" value="ABO38765.1"/>
    <property type="molecule type" value="mRNA"/>
</dbReference>
<dbReference type="EMBL" id="AK221920">
    <property type="protein sequence ID" value="BAD94332.1"/>
    <property type="molecule type" value="mRNA"/>
</dbReference>
<dbReference type="PIR" id="A96713">
    <property type="entry name" value="A96713"/>
</dbReference>
<dbReference type="RefSeq" id="NP_564946.1">
    <property type="nucleotide sequence ID" value="NM_105557.6"/>
</dbReference>
<dbReference type="SMR" id="Q9S713"/>
<dbReference type="BioGRID" id="28436">
    <property type="interactions" value="3"/>
</dbReference>
<dbReference type="FunCoup" id="Q9S713">
    <property type="interactions" value="1278"/>
</dbReference>
<dbReference type="IntAct" id="Q9S713">
    <property type="interactions" value="1"/>
</dbReference>
<dbReference type="MINT" id="Q9S713"/>
<dbReference type="STRING" id="3702.Q9S713"/>
<dbReference type="GlyGen" id="Q9S713">
    <property type="glycosylation" value="1 site"/>
</dbReference>
<dbReference type="iPTMnet" id="Q9S713"/>
<dbReference type="PaxDb" id="3702-AT1G68830.1"/>
<dbReference type="ProteomicsDB" id="245351"/>
<dbReference type="EnsemblPlants" id="AT1G68830.1">
    <property type="protein sequence ID" value="AT1G68830.1"/>
    <property type="gene ID" value="AT1G68830"/>
</dbReference>
<dbReference type="GeneID" id="843215"/>
<dbReference type="Gramene" id="AT1G68830.1">
    <property type="protein sequence ID" value="AT1G68830.1"/>
    <property type="gene ID" value="AT1G68830"/>
</dbReference>
<dbReference type="KEGG" id="ath:AT1G68830"/>
<dbReference type="Araport" id="AT1G68830"/>
<dbReference type="TAIR" id="AT1G68830">
    <property type="gene designation" value="STN7"/>
</dbReference>
<dbReference type="eggNOG" id="KOG0594">
    <property type="taxonomic scope" value="Eukaryota"/>
</dbReference>
<dbReference type="HOGENOM" id="CLU_029227_0_0_1"/>
<dbReference type="InParanoid" id="Q9S713"/>
<dbReference type="OMA" id="AANWVVQ"/>
<dbReference type="OrthoDB" id="10252171at2759"/>
<dbReference type="PhylomeDB" id="Q9S713"/>
<dbReference type="PRO" id="PR:Q9S713"/>
<dbReference type="Proteomes" id="UP000006548">
    <property type="component" value="Chromosome 1"/>
</dbReference>
<dbReference type="ExpressionAtlas" id="Q9S713">
    <property type="expression patterns" value="baseline and differential"/>
</dbReference>
<dbReference type="GO" id="GO:0009507">
    <property type="term" value="C:chloroplast"/>
    <property type="evidence" value="ECO:0000314"/>
    <property type="project" value="TAIR"/>
</dbReference>
<dbReference type="GO" id="GO:0009535">
    <property type="term" value="C:chloroplast thylakoid membrane"/>
    <property type="evidence" value="ECO:0007669"/>
    <property type="project" value="UniProtKB-SubCell"/>
</dbReference>
<dbReference type="GO" id="GO:0042651">
    <property type="term" value="C:thylakoid membrane"/>
    <property type="evidence" value="ECO:0000314"/>
    <property type="project" value="TAIR"/>
</dbReference>
<dbReference type="GO" id="GO:0005524">
    <property type="term" value="F:ATP binding"/>
    <property type="evidence" value="ECO:0007669"/>
    <property type="project" value="UniProtKB-KW"/>
</dbReference>
<dbReference type="GO" id="GO:0004672">
    <property type="term" value="F:protein kinase activity"/>
    <property type="evidence" value="ECO:0000314"/>
    <property type="project" value="TAIR"/>
</dbReference>
<dbReference type="GO" id="GO:0106310">
    <property type="term" value="F:protein serine kinase activity"/>
    <property type="evidence" value="ECO:0007669"/>
    <property type="project" value="RHEA"/>
</dbReference>
<dbReference type="GO" id="GO:0004674">
    <property type="term" value="F:protein serine/threonine kinase activity"/>
    <property type="evidence" value="ECO:0000315"/>
    <property type="project" value="TAIR"/>
</dbReference>
<dbReference type="GO" id="GO:0007623">
    <property type="term" value="P:circadian rhythm"/>
    <property type="evidence" value="ECO:0000270"/>
    <property type="project" value="TAIR"/>
</dbReference>
<dbReference type="GO" id="GO:0009643">
    <property type="term" value="P:photosynthetic acclimation"/>
    <property type="evidence" value="ECO:0000314"/>
    <property type="project" value="TAIR"/>
</dbReference>
<dbReference type="GO" id="GO:0042548">
    <property type="term" value="P:regulation of photosynthesis, light reaction"/>
    <property type="evidence" value="ECO:0000315"/>
    <property type="project" value="TAIR"/>
</dbReference>
<dbReference type="CDD" id="cd14013">
    <property type="entry name" value="STKc_SNT7_plant"/>
    <property type="match status" value="1"/>
</dbReference>
<dbReference type="FunFam" id="1.10.510.10:FF:000678">
    <property type="entry name" value="Serine/threonine-protein kinase STN7, chloroplastic"/>
    <property type="match status" value="1"/>
</dbReference>
<dbReference type="Gene3D" id="3.30.200.20">
    <property type="entry name" value="Phosphorylase Kinase, domain 1"/>
    <property type="match status" value="1"/>
</dbReference>
<dbReference type="Gene3D" id="1.10.510.10">
    <property type="entry name" value="Transferase(Phosphotransferase) domain 1"/>
    <property type="match status" value="1"/>
</dbReference>
<dbReference type="InterPro" id="IPR011009">
    <property type="entry name" value="Kinase-like_dom_sf"/>
</dbReference>
<dbReference type="InterPro" id="IPR000719">
    <property type="entry name" value="Prot_kinase_dom"/>
</dbReference>
<dbReference type="InterPro" id="IPR017441">
    <property type="entry name" value="Protein_kinase_ATP_BS"/>
</dbReference>
<dbReference type="InterPro" id="IPR008271">
    <property type="entry name" value="Ser/Thr_kinase_AS"/>
</dbReference>
<dbReference type="PANTHER" id="PTHR46699">
    <property type="entry name" value="SERINE/THREONINE-PROTEIN KINASE STN8, CHLOROPLASTIC-RELATED"/>
    <property type="match status" value="1"/>
</dbReference>
<dbReference type="PANTHER" id="PTHR46699:SF4">
    <property type="entry name" value="SERINE_THREONINE-PROTEIN KINASE STN7, CHLOROPLASTIC"/>
    <property type="match status" value="1"/>
</dbReference>
<dbReference type="Pfam" id="PF00069">
    <property type="entry name" value="Pkinase"/>
    <property type="match status" value="1"/>
</dbReference>
<dbReference type="SMART" id="SM00220">
    <property type="entry name" value="S_TKc"/>
    <property type="match status" value="1"/>
</dbReference>
<dbReference type="SUPFAM" id="SSF56112">
    <property type="entry name" value="Protein kinase-like (PK-like)"/>
    <property type="match status" value="1"/>
</dbReference>
<dbReference type="PROSITE" id="PS00107">
    <property type="entry name" value="PROTEIN_KINASE_ATP"/>
    <property type="match status" value="1"/>
</dbReference>
<dbReference type="PROSITE" id="PS50011">
    <property type="entry name" value="PROTEIN_KINASE_DOM"/>
    <property type="match status" value="1"/>
</dbReference>
<dbReference type="PROSITE" id="PS00108">
    <property type="entry name" value="PROTEIN_KINASE_ST"/>
    <property type="match status" value="1"/>
</dbReference>
<evidence type="ECO:0000255" key="1"/>
<evidence type="ECO:0000255" key="2">
    <source>
        <dbReference type="PROSITE-ProRule" id="PRU00159"/>
    </source>
</evidence>
<evidence type="ECO:0000255" key="3">
    <source>
        <dbReference type="PROSITE-ProRule" id="PRU10027"/>
    </source>
</evidence>
<evidence type="ECO:0000269" key="4">
    <source>
    </source>
</evidence>
<evidence type="ECO:0000269" key="5">
    <source>
    </source>
</evidence>
<evidence type="ECO:0000269" key="6">
    <source>
    </source>
</evidence>
<evidence type="ECO:0000269" key="7">
    <source>
    </source>
</evidence>
<evidence type="ECO:0000269" key="8">
    <source>
    </source>
</evidence>
<evidence type="ECO:0000269" key="9">
    <source>
    </source>
</evidence>
<evidence type="ECO:0007744" key="10">
    <source>
    </source>
</evidence>
<sequence length="562" mass="63252">MATISPGGAYIGTPSPFLGKKLKPFSLTSPILSFKPTVKLNSSCRAQLIDTVHNLFIGVGVGLPCTVMECGDMIYRSTLPKSNGLTITAPGVALALTALSYLWATPGVAPGFFDMFVLAFVERLFRPTFRKDDFVVGKKLGEGSFGVVYKVSLSKKRSNEEGEYVLKKATEYGAVEIWMNERVRRACGNSCADFVYGFLDKSSKKGPEYWLLWKYEGESTLAGLMQSKEFPYNVETIILGKVQDLPKGLERENKIIQTIMRQLLFALDGLHSTGIIHRDVKPQNIIFSEGSRSFKIIDLGAAADLRVGINYIPKEFLLDPRYAAPEQYIMSTQTPSAPSAPVAAALSPVLWQMNLPDRFDIYSIGLIFLQMAFPSLRSDSNLIQFNRQLKRCDYDLTAWRKLVEPRASADLRRGFELVDLDGGIGWELLTSMVRYKARQRISAKAALAHPYFDRQGLLALSVMQNLRMQYFRATQQDYSEAANWVIQLMAKNGTEKDGGFTETQLQELREKEPRKKANAQRNALASALRLQRKLVKTVTETIDEISDGRKTVWWNRWIPREE</sequence>
<comment type="function">
    <text evidence="4 5 6 7 8 9">Serine/threonine protein kinase required for state transition by phosphorylating light-harvesting complex II outer antennae (LCHII). State transition plays a central role in response to environmental changes and allows to adjust to changing light conditions via the redistribution of light excitation energy between photosystem II (PSII) and photosystem I (PSI). Phosphorylates the minor light harvesting protein LHCB4.2/CP29 and is involved in the light-dependent phosphorylation of TSP9. Acts as a key component of the long-term response (LTR) signaling pathway. Mediates phosphorylation-dependent PTAC16 subcellular localization to regulate plastid gene expression (PubMed:22616989).</text>
</comment>
<comment type="catalytic activity">
    <reaction>
        <text>L-seryl-[protein] + ATP = O-phospho-L-seryl-[protein] + ADP + H(+)</text>
        <dbReference type="Rhea" id="RHEA:17989"/>
        <dbReference type="Rhea" id="RHEA-COMP:9863"/>
        <dbReference type="Rhea" id="RHEA-COMP:11604"/>
        <dbReference type="ChEBI" id="CHEBI:15378"/>
        <dbReference type="ChEBI" id="CHEBI:29999"/>
        <dbReference type="ChEBI" id="CHEBI:30616"/>
        <dbReference type="ChEBI" id="CHEBI:83421"/>
        <dbReference type="ChEBI" id="CHEBI:456216"/>
        <dbReference type="EC" id="2.7.11.1"/>
    </reaction>
</comment>
<comment type="catalytic activity">
    <reaction>
        <text>L-threonyl-[protein] + ATP = O-phospho-L-threonyl-[protein] + ADP + H(+)</text>
        <dbReference type="Rhea" id="RHEA:46608"/>
        <dbReference type="Rhea" id="RHEA-COMP:11060"/>
        <dbReference type="Rhea" id="RHEA-COMP:11605"/>
        <dbReference type="ChEBI" id="CHEBI:15378"/>
        <dbReference type="ChEBI" id="CHEBI:30013"/>
        <dbReference type="ChEBI" id="CHEBI:30616"/>
        <dbReference type="ChEBI" id="CHEBI:61977"/>
        <dbReference type="ChEBI" id="CHEBI:456216"/>
        <dbReference type="EC" id="2.7.11.1"/>
    </reaction>
</comment>
<comment type="subcellular location">
    <subcellularLocation>
        <location evidence="4">Plastid</location>
        <location evidence="4">Chloroplast thylakoid membrane</location>
    </subcellularLocation>
</comment>
<comment type="PTM">
    <text>Phosphorylated.</text>
</comment>
<comment type="similarity">
    <text evidence="2">Belongs to the protein kinase superfamily. Ser/Thr protein kinase family.</text>
</comment>
<feature type="transit peptide" description="Chloroplast" evidence="1">
    <location>
        <begin position="1"/>
        <end position="45"/>
    </location>
</feature>
<feature type="chain" id="PRO_0000024386" description="Serine/threonine-protein kinase STN7, chloroplastic">
    <location>
        <begin position="46"/>
        <end position="562"/>
    </location>
</feature>
<feature type="domain" description="Protein kinase" evidence="2">
    <location>
        <begin position="134"/>
        <end position="452"/>
    </location>
</feature>
<feature type="active site" description="Proton acceptor" evidence="2 3">
    <location>
        <position position="279"/>
    </location>
</feature>
<feature type="binding site" evidence="2">
    <location>
        <begin position="140"/>
        <end position="148"/>
    </location>
    <ligand>
        <name>ATP</name>
        <dbReference type="ChEBI" id="CHEBI:30616"/>
    </ligand>
</feature>
<feature type="binding site" evidence="2">
    <location>
        <position position="167"/>
    </location>
    <ligand>
        <name>ATP</name>
        <dbReference type="ChEBI" id="CHEBI:30616"/>
    </ligand>
</feature>
<feature type="modified residue" description="Phosphoserine" evidence="10">
    <location>
        <position position="526"/>
    </location>
</feature>
<feature type="modified residue" description="Phosphothreonine" evidence="10">
    <location>
        <position position="537"/>
    </location>
</feature>
<feature type="modified residue" description="Phosphothreonine" evidence="10">
    <location>
        <position position="541"/>
    </location>
</feature>
<feature type="mutagenesis site" description="Loss of function." evidence="4">
    <original>K</original>
    <variation>R</variation>
    <variation>Q</variation>
    <location>
        <position position="167"/>
    </location>
</feature>
<reference key="1">
    <citation type="journal article" date="2000" name="Nature">
        <title>Sequence and analysis of chromosome 1 of the plant Arabidopsis thaliana.</title>
        <authorList>
            <person name="Theologis A."/>
            <person name="Ecker J.R."/>
            <person name="Palm C.J."/>
            <person name="Federspiel N.A."/>
            <person name="Kaul S."/>
            <person name="White O."/>
            <person name="Alonso J."/>
            <person name="Altafi H."/>
            <person name="Araujo R."/>
            <person name="Bowman C.L."/>
            <person name="Brooks S.Y."/>
            <person name="Buehler E."/>
            <person name="Chan A."/>
            <person name="Chao Q."/>
            <person name="Chen H."/>
            <person name="Cheuk R.F."/>
            <person name="Chin C.W."/>
            <person name="Chung M.K."/>
            <person name="Conn L."/>
            <person name="Conway A.B."/>
            <person name="Conway A.R."/>
            <person name="Creasy T.H."/>
            <person name="Dewar K."/>
            <person name="Dunn P."/>
            <person name="Etgu P."/>
            <person name="Feldblyum T.V."/>
            <person name="Feng J.-D."/>
            <person name="Fong B."/>
            <person name="Fujii C.Y."/>
            <person name="Gill J.E."/>
            <person name="Goldsmith A.D."/>
            <person name="Haas B."/>
            <person name="Hansen N.F."/>
            <person name="Hughes B."/>
            <person name="Huizar L."/>
            <person name="Hunter J.L."/>
            <person name="Jenkins J."/>
            <person name="Johnson-Hopson C."/>
            <person name="Khan S."/>
            <person name="Khaykin E."/>
            <person name="Kim C.J."/>
            <person name="Koo H.L."/>
            <person name="Kremenetskaia I."/>
            <person name="Kurtz D.B."/>
            <person name="Kwan A."/>
            <person name="Lam B."/>
            <person name="Langin-Hooper S."/>
            <person name="Lee A."/>
            <person name="Lee J.M."/>
            <person name="Lenz C.A."/>
            <person name="Li J.H."/>
            <person name="Li Y.-P."/>
            <person name="Lin X."/>
            <person name="Liu S.X."/>
            <person name="Liu Z.A."/>
            <person name="Luros J.S."/>
            <person name="Maiti R."/>
            <person name="Marziali A."/>
            <person name="Militscher J."/>
            <person name="Miranda M."/>
            <person name="Nguyen M."/>
            <person name="Nierman W.C."/>
            <person name="Osborne B.I."/>
            <person name="Pai G."/>
            <person name="Peterson J."/>
            <person name="Pham P.K."/>
            <person name="Rizzo M."/>
            <person name="Rooney T."/>
            <person name="Rowley D."/>
            <person name="Sakano H."/>
            <person name="Salzberg S.L."/>
            <person name="Schwartz J.R."/>
            <person name="Shinn P."/>
            <person name="Southwick A.M."/>
            <person name="Sun H."/>
            <person name="Tallon L.J."/>
            <person name="Tambunga G."/>
            <person name="Toriumi M.J."/>
            <person name="Town C.D."/>
            <person name="Utterback T."/>
            <person name="Van Aken S."/>
            <person name="Vaysberg M."/>
            <person name="Vysotskaia V.S."/>
            <person name="Walker M."/>
            <person name="Wu D."/>
            <person name="Yu G."/>
            <person name="Fraser C.M."/>
            <person name="Venter J.C."/>
            <person name="Davis R.W."/>
        </authorList>
    </citation>
    <scope>NUCLEOTIDE SEQUENCE [LARGE SCALE GENOMIC DNA]</scope>
    <source>
        <strain>cv. Columbia</strain>
    </source>
</reference>
<reference key="2">
    <citation type="journal article" date="2017" name="Plant J.">
        <title>Araport11: a complete reannotation of the Arabidopsis thaliana reference genome.</title>
        <authorList>
            <person name="Cheng C.Y."/>
            <person name="Krishnakumar V."/>
            <person name="Chan A.P."/>
            <person name="Thibaud-Nissen F."/>
            <person name="Schobel S."/>
            <person name="Town C.D."/>
        </authorList>
    </citation>
    <scope>GENOME REANNOTATION</scope>
    <source>
        <strain>cv. Columbia</strain>
    </source>
</reference>
<reference key="3">
    <citation type="submission" date="2007-03" db="EMBL/GenBank/DDBJ databases">
        <title>Arabidopsis ORF clones.</title>
        <authorList>
            <person name="Bautista V.R."/>
            <person name="Kim C.J."/>
            <person name="Chen H."/>
            <person name="Wu S.Y."/>
            <person name="De Los Reyes C."/>
            <person name="Ecker J.R."/>
        </authorList>
    </citation>
    <scope>NUCLEOTIDE SEQUENCE [LARGE SCALE MRNA]</scope>
    <source>
        <strain>cv. Columbia</strain>
    </source>
</reference>
<reference key="4">
    <citation type="submission" date="2005-03" db="EMBL/GenBank/DDBJ databases">
        <title>Large-scale analysis of RIKEN Arabidopsis full-length (RAFL) cDNAs.</title>
        <authorList>
            <person name="Totoki Y."/>
            <person name="Seki M."/>
            <person name="Ishida J."/>
            <person name="Nakajima M."/>
            <person name="Enju A."/>
            <person name="Kamiya A."/>
            <person name="Narusaka M."/>
            <person name="Shin-i T."/>
            <person name="Nakagawa M."/>
            <person name="Sakamoto N."/>
            <person name="Oishi K."/>
            <person name="Kohara Y."/>
            <person name="Kobayashi M."/>
            <person name="Toyoda A."/>
            <person name="Sakaki Y."/>
            <person name="Sakurai T."/>
            <person name="Iida K."/>
            <person name="Akiyama K."/>
            <person name="Satou M."/>
            <person name="Toyoda T."/>
            <person name="Konagaya A."/>
            <person name="Carninci P."/>
            <person name="Kawai J."/>
            <person name="Hayashizaki Y."/>
            <person name="Shinozaki K."/>
        </authorList>
    </citation>
    <scope>NUCLEOTIDE SEQUENCE [LARGE SCALE MRNA] OF 236-562</scope>
    <source>
        <strain>cv. Columbia</strain>
    </source>
</reference>
<reference key="5">
    <citation type="journal article" date="2005" name="Nature">
        <title>State transitions and light adaptation require chloroplast thylakoid protein kinase STN7.</title>
        <authorList>
            <person name="Bellafiore S."/>
            <person name="Barneche F."/>
            <person name="Peltier G."/>
            <person name="Rochaix J.-D."/>
        </authorList>
    </citation>
    <scope>FUNCTION</scope>
    <scope>SUBCELLULAR LOCATION</scope>
    <scope>MUTAGENESIS OF LYS-167</scope>
</reference>
<reference key="6">
    <citation type="journal article" date="2005" name="Nature">
        <title>Photosystem II core phosphorylation and photosynthetic acclimation require two different protein kinases.</title>
        <authorList>
            <person name="Bonardi V."/>
            <person name="Pesaresi P."/>
            <person name="Becker T."/>
            <person name="Schleiff E."/>
            <person name="Wagner R."/>
            <person name="Pfannschmidt T."/>
            <person name="Jahns P."/>
            <person name="Leister D."/>
        </authorList>
    </citation>
    <scope>FUNCTION</scope>
</reference>
<reference key="7">
    <citation type="journal article" date="2006" name="Plant Mol. Biol.">
        <title>State transitions revisited-a buffering system for dynamic low light acclimation of Arabidopsis.</title>
        <authorList>
            <person name="Tikkanen M."/>
            <person name="Piippo M."/>
            <person name="Suorsa M."/>
            <person name="Sirpioe S."/>
            <person name="Mulo P."/>
            <person name="Vainonen J."/>
            <person name="Vener A.V."/>
            <person name="Allahverdiyeva Y."/>
            <person name="Aro E.-M."/>
        </authorList>
    </citation>
    <scope>FUNCTION</scope>
</reference>
<reference key="8">
    <citation type="journal article" date="2009" name="Biochemistry">
        <title>Intrinsically unstructured phosphoprotein TSP9 regulates light harvesting in Arabidopsis thaliana.</title>
        <authorList>
            <person name="Fristedt R."/>
            <person name="Carlberg I."/>
            <person name="Zygadlo A."/>
            <person name="Piippo M."/>
            <person name="Nurmi M."/>
            <person name="Aro E.M."/>
            <person name="Scheller H.V."/>
            <person name="Vener A.V."/>
        </authorList>
    </citation>
    <scope>FUNCTION</scope>
</reference>
<reference key="9">
    <citation type="journal article" date="2009" name="Plant Cell">
        <title>Arabidopsis STN7 kinase provides a link between short- and long-term photosynthetic acclimation.</title>
        <authorList>
            <person name="Pesaresi P."/>
            <person name="Hertle A."/>
            <person name="Pribil M."/>
            <person name="Kleine T."/>
            <person name="Wagner R."/>
            <person name="Strissel H."/>
            <person name="Ihnatowicz A."/>
            <person name="Bonardi V."/>
            <person name="Scharfenberg M."/>
            <person name="Schneider A."/>
            <person name="Pfannschmidt T."/>
            <person name="Leister D."/>
        </authorList>
    </citation>
    <scope>FUNCTION</scope>
</reference>
<reference key="10">
    <citation type="journal article" date="2009" name="Plant Physiol.">
        <title>Large-scale Arabidopsis phosphoproteome profiling reveals novel chloroplast kinase substrates and phosphorylation networks.</title>
        <authorList>
            <person name="Reiland S."/>
            <person name="Messerli G."/>
            <person name="Baerenfaller K."/>
            <person name="Gerrits B."/>
            <person name="Endler A."/>
            <person name="Grossmann J."/>
            <person name="Gruissem W."/>
            <person name="Baginsky S."/>
        </authorList>
    </citation>
    <scope>PHOSPHORYLATION [LARGE SCALE ANALYSIS] AT SER-526; THR-537 AND THR-541</scope>
    <scope>IDENTIFICATION BY MASS SPECTROMETRY [LARGE SCALE ANALYSIS]</scope>
</reference>
<reference key="11">
    <citation type="journal article" date="2012" name="FEBS Lett.">
        <title>Phosphoproteomics of Arabidopsis chloroplasts reveals involvement of the STN7 kinase in phosphorylation of nucleoid protein pTAC16.</title>
        <authorList>
            <person name="Ingelsson B."/>
            <person name="Vener A.V."/>
        </authorList>
    </citation>
    <scope>FUNCTION</scope>
    <source>
        <strain>cv. Columbia</strain>
    </source>
</reference>
<protein>
    <recommendedName>
        <fullName>Serine/threonine-protein kinase STN7, chloroplastic</fullName>
        <ecNumber>2.7.11.1</ecNumber>
    </recommendedName>
    <alternativeName>
        <fullName>Protein STATE TRANSITION 7</fullName>
    </alternativeName>
    <alternativeName>
        <fullName>Stt7 homolog</fullName>
    </alternativeName>
</protein>
<organism>
    <name type="scientific">Arabidopsis thaliana</name>
    <name type="common">Mouse-ear cress</name>
    <dbReference type="NCBI Taxonomy" id="3702"/>
    <lineage>
        <taxon>Eukaryota</taxon>
        <taxon>Viridiplantae</taxon>
        <taxon>Streptophyta</taxon>
        <taxon>Embryophyta</taxon>
        <taxon>Tracheophyta</taxon>
        <taxon>Spermatophyta</taxon>
        <taxon>Magnoliopsida</taxon>
        <taxon>eudicotyledons</taxon>
        <taxon>Gunneridae</taxon>
        <taxon>Pentapetalae</taxon>
        <taxon>rosids</taxon>
        <taxon>malvids</taxon>
        <taxon>Brassicales</taxon>
        <taxon>Brassicaceae</taxon>
        <taxon>Camelineae</taxon>
        <taxon>Arabidopsis</taxon>
    </lineage>
</organism>